<protein>
    <recommendedName>
        <fullName>Torsin-like protein</fullName>
    </recommendedName>
    <alternativeName>
        <fullName>Abnormal oocyte formation protein 5</fullName>
    </alternativeName>
</protein>
<evidence type="ECO:0000255" key="1"/>
<evidence type="ECO:0000269" key="2">
    <source>
    </source>
</evidence>
<evidence type="ECO:0000269" key="3">
    <source ref="2"/>
</evidence>
<evidence type="ECO:0000305" key="4"/>
<accession>Q95NU5</accession>
<accession>Q95NY6</accession>
<reference key="1">
    <citation type="journal article" date="1998" name="Science">
        <title>Genome sequence of the nematode C. elegans: a platform for investigating biology.</title>
        <authorList>
            <consortium name="The C. elegans sequencing consortium"/>
        </authorList>
    </citation>
    <scope>NUCLEOTIDE SEQUENCE [LARGE SCALE GENOMIC DNA]</scope>
    <scope>ALTERNATIVE SPLICING</scope>
    <source>
        <strain>Bristol N2</strain>
    </source>
</reference>
<reference key="2">
    <citation type="book" date="2001" name="Proceedings of the 13th international C. elegans meeting">
        <title>OOC-5, required for polarity in the 2-cell embryo, encodes a AAA+ ATPase related to the human disease protein Torsin A.</title>
        <authorList>
            <person name="Basham S.E."/>
            <person name="Rose L.S."/>
        </authorList>
    </citation>
    <scope>IDENTIFICATION</scope>
    <scope>FUNCTION</scope>
    <scope>SUBCELLULAR LOCATION</scope>
    <scope>DISRUPTION PHENOTYPE</scope>
</reference>
<reference key="3">
    <citation type="journal article" date="2007" name="Mol. Cell. Proteomics">
        <title>Proteomics reveals N-linked glycoprotein diversity in Caenorhabditis elegans and suggests an atypical translocation mechanism for integral membrane proteins.</title>
        <authorList>
            <person name="Kaji H."/>
            <person name="Kamiie J."/>
            <person name="Kawakami H."/>
            <person name="Kido K."/>
            <person name="Yamauchi Y."/>
            <person name="Shinkawa T."/>
            <person name="Taoka M."/>
            <person name="Takahashi N."/>
            <person name="Isobe T."/>
        </authorList>
    </citation>
    <scope>GLYCOSYLATION [LARGE SCALE ANALYSIS] AT ASN-125</scope>
    <scope>IDENTIFICATION BY MASS SPECTROMETRY</scope>
    <source>
        <strain>Bristol N2</strain>
    </source>
</reference>
<keyword id="KW-0025">Alternative splicing</keyword>
<keyword id="KW-0067">ATP-binding</keyword>
<keyword id="KW-0256">Endoplasmic reticulum</keyword>
<keyword id="KW-0325">Glycoprotein</keyword>
<keyword id="KW-0547">Nucleotide-binding</keyword>
<keyword id="KW-1185">Reference proteome</keyword>
<keyword id="KW-0732">Signal</keyword>
<sequence length="356" mass="40814">MKLDYVLLLLFHLCFVNTELISVITGKIKDSGTTIAISAGAFWGLKDRLKCYLYECCHEPDVNFNYHTLDADIANLLFGQHLVKDVVVNSIKSHWYNENPRKPLVLSFHGYTGSGKNYVAEIIANNTFRLGLRSTFVQHIVATNDFPDKNKLEEYQVELRNRILTTVQKCQRSIFIFDEADKLPEQLLGAIKPFLDYYSTISGVDFRRSIFILLSNKGGGEIARITKEQYESGYPREQLRLEAFERELMNFSYNEKGGLQMSELISNHLIDHFVPFLPLQREHVRSCVGAYLRKRGRGDLVSNVDFVERVLNSLQYFPESSKAFSSSGCKRVDAKTDLEMAKIRPLLSSVHFDDEL</sequence>
<organism>
    <name type="scientific">Caenorhabditis elegans</name>
    <dbReference type="NCBI Taxonomy" id="6239"/>
    <lineage>
        <taxon>Eukaryota</taxon>
        <taxon>Metazoa</taxon>
        <taxon>Ecdysozoa</taxon>
        <taxon>Nematoda</taxon>
        <taxon>Chromadorea</taxon>
        <taxon>Rhabditida</taxon>
        <taxon>Rhabditina</taxon>
        <taxon>Rhabditomorpha</taxon>
        <taxon>Rhabditoidea</taxon>
        <taxon>Rhabditidae</taxon>
        <taxon>Peloderinae</taxon>
        <taxon>Caenorhabditis</taxon>
    </lineage>
</organism>
<name>TORS_CAEEL</name>
<dbReference type="EMBL" id="Z70034">
    <property type="protein sequence ID" value="CAC44293.1"/>
    <property type="molecule type" value="Genomic_DNA"/>
</dbReference>
<dbReference type="EMBL" id="Z49910">
    <property type="protein sequence ID" value="CAC44293.1"/>
    <property type="status" value="JOINED"/>
    <property type="molecule type" value="Genomic_DNA"/>
</dbReference>
<dbReference type="EMBL" id="Z70034">
    <property type="protein sequence ID" value="CAC44294.1"/>
    <property type="molecule type" value="Genomic_DNA"/>
</dbReference>
<dbReference type="EMBL" id="Z49910">
    <property type="protein sequence ID" value="CAC44294.1"/>
    <property type="status" value="JOINED"/>
    <property type="molecule type" value="Genomic_DNA"/>
</dbReference>
<dbReference type="RefSeq" id="NP_495916.1">
    <molecule id="Q95NU5-1"/>
    <property type="nucleotide sequence ID" value="NM_063515.3"/>
</dbReference>
<dbReference type="RefSeq" id="NP_495917.1">
    <molecule id="Q95NU5-2"/>
    <property type="nucleotide sequence ID" value="NM_063516.6"/>
</dbReference>
<dbReference type="SMR" id="Q95NU5"/>
<dbReference type="BioGRID" id="39760">
    <property type="interactions" value="1"/>
</dbReference>
<dbReference type="FunCoup" id="Q95NU5">
    <property type="interactions" value="2459"/>
</dbReference>
<dbReference type="STRING" id="6239.C18E9.11b.1"/>
<dbReference type="GlyCosmos" id="Q95NU5">
    <property type="glycosylation" value="2 sites, No reported glycans"/>
</dbReference>
<dbReference type="iPTMnet" id="Q95NU5"/>
<dbReference type="PaxDb" id="6239-C18E9.11b"/>
<dbReference type="PeptideAtlas" id="Q95NU5"/>
<dbReference type="EnsemblMetazoa" id="C18E9.11a.1">
    <molecule id="Q95NU5-2"/>
    <property type="protein sequence ID" value="C18E9.11a.1"/>
    <property type="gene ID" value="WBGene00003870"/>
</dbReference>
<dbReference type="EnsemblMetazoa" id="C18E9.11b.1">
    <molecule id="Q95NU5-1"/>
    <property type="protein sequence ID" value="C18E9.11b.1"/>
    <property type="gene ID" value="WBGene00003870"/>
</dbReference>
<dbReference type="GeneID" id="174433"/>
<dbReference type="KEGG" id="cel:CELE_C18E9.11"/>
<dbReference type="UCSC" id="C18E9.11a">
    <molecule id="Q95NU5-1"/>
    <property type="organism name" value="c. elegans"/>
</dbReference>
<dbReference type="AGR" id="WB:WBGene00003870"/>
<dbReference type="CTD" id="174433"/>
<dbReference type="WormBase" id="C18E9.11a">
    <molecule id="Q95NU5-2"/>
    <property type="protein sequence ID" value="CE28283"/>
    <property type="gene ID" value="WBGene00003870"/>
    <property type="gene designation" value="ooc-5"/>
</dbReference>
<dbReference type="WormBase" id="C18E9.11b">
    <molecule id="Q95NU5-1"/>
    <property type="protein sequence ID" value="CE28284"/>
    <property type="gene ID" value="WBGene00003870"/>
    <property type="gene designation" value="ooc-5"/>
</dbReference>
<dbReference type="eggNOG" id="KOG2170">
    <property type="taxonomic scope" value="Eukaryota"/>
</dbReference>
<dbReference type="GeneTree" id="ENSGT00950000182888"/>
<dbReference type="InParanoid" id="Q95NU5"/>
<dbReference type="OMA" id="ECCDDRS"/>
<dbReference type="OrthoDB" id="19623at2759"/>
<dbReference type="PhylomeDB" id="Q95NU5"/>
<dbReference type="Reactome" id="R-CEL-114608">
    <property type="pathway name" value="Platelet degranulation"/>
</dbReference>
<dbReference type="Reactome" id="R-CEL-8856825">
    <property type="pathway name" value="Cargo recognition for clathrin-mediated endocytosis"/>
</dbReference>
<dbReference type="PRO" id="PR:Q95NU5"/>
<dbReference type="Proteomes" id="UP000001940">
    <property type="component" value="Chromosome II"/>
</dbReference>
<dbReference type="Bgee" id="WBGene00003870">
    <property type="expression patterns" value="Expressed in embryo and 3 other cell types or tissues"/>
</dbReference>
<dbReference type="GO" id="GO:0005818">
    <property type="term" value="C:aster"/>
    <property type="evidence" value="ECO:0000314"/>
    <property type="project" value="WormBase"/>
</dbReference>
<dbReference type="GO" id="GO:0005783">
    <property type="term" value="C:endoplasmic reticulum"/>
    <property type="evidence" value="ECO:0000314"/>
    <property type="project" value="WormBase"/>
</dbReference>
<dbReference type="GO" id="GO:0005788">
    <property type="term" value="C:endoplasmic reticulum lumen"/>
    <property type="evidence" value="ECO:0007669"/>
    <property type="project" value="UniProtKB-SubCell"/>
</dbReference>
<dbReference type="GO" id="GO:0048471">
    <property type="term" value="C:perinuclear region of cytoplasm"/>
    <property type="evidence" value="ECO:0000314"/>
    <property type="project" value="WormBase"/>
</dbReference>
<dbReference type="GO" id="GO:0005886">
    <property type="term" value="C:plasma membrane"/>
    <property type="evidence" value="ECO:0000314"/>
    <property type="project" value="WormBase"/>
</dbReference>
<dbReference type="GO" id="GO:0005819">
    <property type="term" value="C:spindle"/>
    <property type="evidence" value="ECO:0000314"/>
    <property type="project" value="WormBase"/>
</dbReference>
<dbReference type="GO" id="GO:0000922">
    <property type="term" value="C:spindle pole"/>
    <property type="evidence" value="ECO:0000314"/>
    <property type="project" value="WormBase"/>
</dbReference>
<dbReference type="GO" id="GO:0005524">
    <property type="term" value="F:ATP binding"/>
    <property type="evidence" value="ECO:0007669"/>
    <property type="project" value="UniProtKB-KW"/>
</dbReference>
<dbReference type="GO" id="GO:0016887">
    <property type="term" value="F:ATP hydrolysis activity"/>
    <property type="evidence" value="ECO:0007669"/>
    <property type="project" value="InterPro"/>
</dbReference>
<dbReference type="GO" id="GO:0071218">
    <property type="term" value="P:cellular response to misfolded protein"/>
    <property type="evidence" value="ECO:0000314"/>
    <property type="project" value="WormBase"/>
</dbReference>
<dbReference type="GO" id="GO:0051085">
    <property type="term" value="P:chaperone cofactor-dependent protein refolding"/>
    <property type="evidence" value="ECO:0007669"/>
    <property type="project" value="InterPro"/>
</dbReference>
<dbReference type="CDD" id="cd00009">
    <property type="entry name" value="AAA"/>
    <property type="match status" value="1"/>
</dbReference>
<dbReference type="FunFam" id="3.40.50.300:FF:002276">
    <property type="entry name" value="Torsin, putative"/>
    <property type="match status" value="1"/>
</dbReference>
<dbReference type="Gene3D" id="3.40.50.300">
    <property type="entry name" value="P-loop containing nucleotide triphosphate hydrolases"/>
    <property type="match status" value="1"/>
</dbReference>
<dbReference type="InterPro" id="IPR001270">
    <property type="entry name" value="ClpA/B"/>
</dbReference>
<dbReference type="InterPro" id="IPR027417">
    <property type="entry name" value="P-loop_NTPase"/>
</dbReference>
<dbReference type="InterPro" id="IPR049337">
    <property type="entry name" value="TOR1A_C"/>
</dbReference>
<dbReference type="InterPro" id="IPR010448">
    <property type="entry name" value="Torsin"/>
</dbReference>
<dbReference type="InterPro" id="IPR017378">
    <property type="entry name" value="Torsin_1/2"/>
</dbReference>
<dbReference type="PANTHER" id="PTHR10760:SF2">
    <property type="entry name" value="LD13476P-RELATED"/>
    <property type="match status" value="1"/>
</dbReference>
<dbReference type="PANTHER" id="PTHR10760">
    <property type="entry name" value="TORSIN"/>
    <property type="match status" value="1"/>
</dbReference>
<dbReference type="Pfam" id="PF21376">
    <property type="entry name" value="TOR1A_C"/>
    <property type="match status" value="1"/>
</dbReference>
<dbReference type="Pfam" id="PF06309">
    <property type="entry name" value="Torsin"/>
    <property type="match status" value="1"/>
</dbReference>
<dbReference type="PIRSF" id="PIRSF038079">
    <property type="entry name" value="Torsin_2A"/>
    <property type="match status" value="1"/>
</dbReference>
<dbReference type="PRINTS" id="PR00300">
    <property type="entry name" value="CLPPROTEASEA"/>
</dbReference>
<dbReference type="SUPFAM" id="SSF52540">
    <property type="entry name" value="P-loop containing nucleoside triphosphate hydrolases"/>
    <property type="match status" value="1"/>
</dbReference>
<feature type="signal peptide" evidence="1">
    <location>
        <begin position="1"/>
        <end position="18"/>
    </location>
</feature>
<feature type="chain" id="PRO_0000005511" description="Torsin-like protein">
    <location>
        <begin position="19"/>
        <end position="356"/>
    </location>
</feature>
<feature type="binding site" evidence="1">
    <location>
        <begin position="110"/>
        <end position="117"/>
    </location>
    <ligand>
        <name>ATP</name>
        <dbReference type="ChEBI" id="CHEBI:30616"/>
    </ligand>
</feature>
<feature type="glycosylation site" description="N-linked (GlcNAc...) asparagine" evidence="2">
    <location>
        <position position="125"/>
    </location>
</feature>
<feature type="glycosylation site" description="N-linked (GlcNAc...) asparagine" evidence="1">
    <location>
        <position position="250"/>
    </location>
</feature>
<feature type="splice variant" id="VSP_001107" description="In isoform a." evidence="4">
    <location>
        <begin position="26"/>
        <end position="31"/>
    </location>
</feature>
<proteinExistence type="evidence at protein level"/>
<gene>
    <name type="primary">ooc-5</name>
    <name type="ORF">C18E9.11</name>
</gene>
<comment type="function">
    <text evidence="3">May serve as a molecular chaperone assisting in the proper folding of secreted and/or membrane proteins.</text>
</comment>
<comment type="subcellular location">
    <subcellularLocation>
        <location evidence="3">Endoplasmic reticulum lumen</location>
    </subcellularLocation>
</comment>
<comment type="alternative products">
    <event type="alternative splicing"/>
    <isoform>
        <id>Q95NU5-1</id>
        <name>b</name>
        <sequence type="displayed"/>
    </isoform>
    <isoform>
        <id>Q95NU5-2</id>
        <name>a</name>
        <sequence type="described" ref="VSP_001107"/>
    </isoform>
</comment>
<comment type="disruption phenotype">
    <text evidence="3">Worms show defects in asymmetric divisions in early embryos. In particular, mutations specifically affect the reestablishment of asymmetric PAR protein domains in the P1 cell at the 2-cell stage.</text>
</comment>
<comment type="similarity">
    <text evidence="4">Belongs to the ClpA/ClpB family. Torsin subfamily.</text>
</comment>